<name>KDSA_SALHS</name>
<proteinExistence type="inferred from homology"/>
<evidence type="ECO:0000255" key="1">
    <source>
        <dbReference type="HAMAP-Rule" id="MF_00056"/>
    </source>
</evidence>
<comment type="catalytic activity">
    <reaction evidence="1">
        <text>D-arabinose 5-phosphate + phosphoenolpyruvate + H2O = 3-deoxy-alpha-D-manno-2-octulosonate-8-phosphate + phosphate</text>
        <dbReference type="Rhea" id="RHEA:14053"/>
        <dbReference type="ChEBI" id="CHEBI:15377"/>
        <dbReference type="ChEBI" id="CHEBI:43474"/>
        <dbReference type="ChEBI" id="CHEBI:57693"/>
        <dbReference type="ChEBI" id="CHEBI:58702"/>
        <dbReference type="ChEBI" id="CHEBI:85985"/>
        <dbReference type="EC" id="2.5.1.55"/>
    </reaction>
</comment>
<comment type="pathway">
    <text evidence="1">Carbohydrate biosynthesis; 3-deoxy-D-manno-octulosonate biosynthesis; 3-deoxy-D-manno-octulosonate from D-ribulose 5-phosphate: step 2/3.</text>
</comment>
<comment type="pathway">
    <text evidence="1">Bacterial outer membrane biogenesis; lipopolysaccharide biosynthesis.</text>
</comment>
<comment type="subcellular location">
    <subcellularLocation>
        <location evidence="1">Cytoplasm</location>
    </subcellularLocation>
</comment>
<comment type="similarity">
    <text evidence="1">Belongs to the KdsA family.</text>
</comment>
<feature type="chain" id="PRO_1000091833" description="2-dehydro-3-deoxyphosphooctonate aldolase">
    <location>
        <begin position="1"/>
        <end position="284"/>
    </location>
</feature>
<protein>
    <recommendedName>
        <fullName evidence="1">2-dehydro-3-deoxyphosphooctonate aldolase</fullName>
        <ecNumber evidence="1">2.5.1.55</ecNumber>
    </recommendedName>
    <alternativeName>
        <fullName evidence="1">3-deoxy-D-manno-octulosonic acid 8-phosphate synthase</fullName>
    </alternativeName>
    <alternativeName>
        <fullName evidence="1">KDO-8-phosphate synthase</fullName>
        <shortName evidence="1">KDO 8-P synthase</shortName>
        <shortName evidence="1">KDOPS</shortName>
    </alternativeName>
    <alternativeName>
        <fullName evidence="1">Phospho-2-dehydro-3-deoxyoctonate aldolase</fullName>
    </alternativeName>
</protein>
<dbReference type="EC" id="2.5.1.55" evidence="1"/>
<dbReference type="EMBL" id="CP001120">
    <property type="protein sequence ID" value="ACF70347.1"/>
    <property type="molecule type" value="Genomic_DNA"/>
</dbReference>
<dbReference type="RefSeq" id="WP_000811046.1">
    <property type="nucleotide sequence ID" value="NC_011083.1"/>
</dbReference>
<dbReference type="SMR" id="B4TKA0"/>
<dbReference type="KEGG" id="seh:SeHA_C1967"/>
<dbReference type="HOGENOM" id="CLU_036666_0_0_6"/>
<dbReference type="UniPathway" id="UPA00030"/>
<dbReference type="UniPathway" id="UPA00357">
    <property type="reaction ID" value="UER00474"/>
</dbReference>
<dbReference type="Proteomes" id="UP000001866">
    <property type="component" value="Chromosome"/>
</dbReference>
<dbReference type="GO" id="GO:0005737">
    <property type="term" value="C:cytoplasm"/>
    <property type="evidence" value="ECO:0007669"/>
    <property type="project" value="UniProtKB-SubCell"/>
</dbReference>
<dbReference type="GO" id="GO:0008676">
    <property type="term" value="F:3-deoxy-8-phosphooctulonate synthase activity"/>
    <property type="evidence" value="ECO:0007669"/>
    <property type="project" value="UniProtKB-UniRule"/>
</dbReference>
<dbReference type="GO" id="GO:0019294">
    <property type="term" value="P:keto-3-deoxy-D-manno-octulosonic acid biosynthetic process"/>
    <property type="evidence" value="ECO:0007669"/>
    <property type="project" value="UniProtKB-UniRule"/>
</dbReference>
<dbReference type="FunFam" id="3.20.20.70:FF:000058">
    <property type="entry name" value="2-dehydro-3-deoxyphosphooctonate aldolase"/>
    <property type="match status" value="1"/>
</dbReference>
<dbReference type="Gene3D" id="3.20.20.70">
    <property type="entry name" value="Aldolase class I"/>
    <property type="match status" value="1"/>
</dbReference>
<dbReference type="HAMAP" id="MF_00056">
    <property type="entry name" value="KDO8P_synth"/>
    <property type="match status" value="1"/>
</dbReference>
<dbReference type="InterPro" id="IPR013785">
    <property type="entry name" value="Aldolase_TIM"/>
</dbReference>
<dbReference type="InterPro" id="IPR006218">
    <property type="entry name" value="DAHP1/KDSA"/>
</dbReference>
<dbReference type="InterPro" id="IPR006269">
    <property type="entry name" value="KDO8P_synthase"/>
</dbReference>
<dbReference type="NCBIfam" id="TIGR01362">
    <property type="entry name" value="KDO8P_synth"/>
    <property type="match status" value="1"/>
</dbReference>
<dbReference type="NCBIfam" id="NF003543">
    <property type="entry name" value="PRK05198.1"/>
    <property type="match status" value="1"/>
</dbReference>
<dbReference type="NCBIfam" id="NF009109">
    <property type="entry name" value="PRK12457.1"/>
    <property type="match status" value="1"/>
</dbReference>
<dbReference type="PANTHER" id="PTHR21057">
    <property type="entry name" value="PHOSPHO-2-DEHYDRO-3-DEOXYHEPTONATE ALDOLASE"/>
    <property type="match status" value="1"/>
</dbReference>
<dbReference type="Pfam" id="PF00793">
    <property type="entry name" value="DAHP_synth_1"/>
    <property type="match status" value="1"/>
</dbReference>
<dbReference type="SUPFAM" id="SSF51569">
    <property type="entry name" value="Aldolase"/>
    <property type="match status" value="1"/>
</dbReference>
<sequence>MKQKVVNIGDIKVANDLPFVLFGGMNVLESRDLAMRICEHYVTVTQKLGIPYVFKASFDKANRSSIHSYRGPGLEEGMKIFQELKQTFGVKVITDVHEASQAQPVADVVDVIQLPAFLARQTDLVEAMAKTGAVINVKKPQFVSPGQMGNIVDKFHEGGNDKVILCDRGANFGYDNLVVDMLGFSVMKKVSGNSPVIFDVTHALQCRDPFGAASGGRRGQVTELARAGMAVGLAGLFLESHPDPANAKCDGPSALPLAKLEQFLTQIKAIDDLVKSFDELDTEN</sequence>
<reference key="1">
    <citation type="journal article" date="2011" name="J. Bacteriol.">
        <title>Comparative genomics of 28 Salmonella enterica isolates: evidence for CRISPR-mediated adaptive sublineage evolution.</title>
        <authorList>
            <person name="Fricke W.F."/>
            <person name="Mammel M.K."/>
            <person name="McDermott P.F."/>
            <person name="Tartera C."/>
            <person name="White D.G."/>
            <person name="Leclerc J.E."/>
            <person name="Ravel J."/>
            <person name="Cebula T.A."/>
        </authorList>
    </citation>
    <scope>NUCLEOTIDE SEQUENCE [LARGE SCALE GENOMIC DNA]</scope>
    <source>
        <strain>SL476</strain>
    </source>
</reference>
<keyword id="KW-0963">Cytoplasm</keyword>
<keyword id="KW-0448">Lipopolysaccharide biosynthesis</keyword>
<keyword id="KW-0808">Transferase</keyword>
<accession>B4TKA0</accession>
<organism>
    <name type="scientific">Salmonella heidelberg (strain SL476)</name>
    <dbReference type="NCBI Taxonomy" id="454169"/>
    <lineage>
        <taxon>Bacteria</taxon>
        <taxon>Pseudomonadati</taxon>
        <taxon>Pseudomonadota</taxon>
        <taxon>Gammaproteobacteria</taxon>
        <taxon>Enterobacterales</taxon>
        <taxon>Enterobacteriaceae</taxon>
        <taxon>Salmonella</taxon>
    </lineage>
</organism>
<gene>
    <name evidence="1" type="primary">kdsA</name>
    <name type="ordered locus">SeHA_C1967</name>
</gene>